<gene>
    <name type="primary">VP</name>
</gene>
<reference key="1">
    <citation type="journal article" date="1994" name="Virology">
        <title>Complete nucleotide sequence and genomic organization of the Aedes albopictus parvovirus (AaPV) pathogenic for Aedes aegypti larvae.</title>
        <authorList>
            <person name="Boublik Y."/>
            <person name="Jousset F.X."/>
            <person name="Bergoin M."/>
        </authorList>
    </citation>
    <scope>NUCLEOTIDE SEQUENCE [GENOMIC DNA]</scope>
</reference>
<reference key="2">
    <citation type="journal article" date="2007" name="Sci. China, Ser. C, Life Sci.">
        <title>Structure comparisons of Aedes albopictus densovirus with other parvoviruses.</title>
        <authorList>
            <person name="Cheng L."/>
            <person name="Chen S."/>
            <person name="Zhou Z.H."/>
            <person name="Zhang J."/>
        </authorList>
    </citation>
    <scope>FUNCTION</scope>
    <source>
        <strain>Aedes albopictus C6/36 cell densovirus</strain>
    </source>
</reference>
<sequence>MADSTTMEHDGRGTKRKREADGGSGQGVGKGNSNAVKEGYGPNITEMVPRNIFNKGNHTIYHVVKTQKYLDFNYVTNQNPYIIPYQTAGFWGSMWDQTDIGNNQSINIMKALNAVALGVTWIKGEITFEVYSVTRQRLLTGTTNQTTWDFETSQNMFIADADREPENFNLETVAATGPLAQQTTQTLLFNSHNDRYTKYELPQRNQYTREINFQQLTNNYMWRPLDISKETNFRSLIPMSEGVYTKSENLRQTEFTYETTTYATSGATTRQTLFRNRTSYPRMHIAQPQVPDETGFMKFRYQVRMSTKLHLNFHMYPDYATNNNLEYMHRQTILLPQVAETNGIVACMPYEINTQ</sequence>
<name>CAPSD_AADNV</name>
<feature type="chain" id="PRO_0000039443" description="Capsid protein VP1/VP2">
    <location>
        <begin position="1"/>
        <end position="355"/>
    </location>
</feature>
<feature type="region of interest" description="Disordered" evidence="2">
    <location>
        <begin position="1"/>
        <end position="41"/>
    </location>
</feature>
<feature type="compositionally biased region" description="Basic and acidic residues" evidence="2">
    <location>
        <begin position="1"/>
        <end position="21"/>
    </location>
</feature>
<protein>
    <recommendedName>
        <fullName>Capsid protein VP1/VP2</fullName>
    </recommendedName>
    <alternativeName>
        <fullName>Coat protein VP1/VP2</fullName>
    </alternativeName>
</protein>
<comment type="function">
    <text evidence="1 3">Capsid protein self-assembles to form an icosahedral capsid with a T=1 symmetry, about 22 nm in diameter, and consisting of 60 copies of size variants of the capsid proteins, which differ in the N-terminushe capsid encapsulates the genomic ssDNA. Capsid proteins are responsible for the attachment to host cell receptors. This attachment induces virion internalization predominantly through clathrin-dependent endocytosis (By similarity).</text>
</comment>
<comment type="subcellular location">
    <subcellularLocation>
        <location evidence="4">Virion</location>
    </subcellularLocation>
</comment>
<comment type="alternative products">
    <event type="alternative initiation"/>
    <isoform>
        <id>Q90187-1</id>
        <name>VP1</name>
        <sequence type="displayed"/>
    </isoform>
    <isoform>
        <id>Q90187-2</id>
        <name>VP2</name>
        <sequence type="not described"/>
    </isoform>
</comment>
<comment type="similarity">
    <text evidence="4">Belongs to the parvoviridae capsid protein family.</text>
</comment>
<comment type="sequence caution" evidence="4">
    <conflict type="erroneous initiation">
        <sequence resource="EMBL-CDS" id="CAA52901"/>
    </conflict>
</comment>
<dbReference type="EMBL" id="X74945">
    <property type="protein sequence ID" value="CAA52901.1"/>
    <property type="status" value="ALT_INIT"/>
    <property type="molecule type" value="Genomic_DNA"/>
</dbReference>
<dbReference type="RefSeq" id="NP_694829.3">
    <property type="nucleotide sequence ID" value="NC_004285.1"/>
</dbReference>
<dbReference type="SMR" id="Q90187"/>
<dbReference type="GeneID" id="955418"/>
<dbReference type="KEGG" id="vg:955418"/>
<dbReference type="Proteomes" id="UP000008472">
    <property type="component" value="Segment"/>
</dbReference>
<dbReference type="GO" id="GO:0039615">
    <property type="term" value="C:T=1 icosahedral viral capsid"/>
    <property type="evidence" value="ECO:0007669"/>
    <property type="project" value="UniProtKB-KW"/>
</dbReference>
<dbReference type="GO" id="GO:0075512">
    <property type="term" value="P:clathrin-dependent endocytosis of virus by host cell"/>
    <property type="evidence" value="ECO:0007669"/>
    <property type="project" value="UniProtKB-KW"/>
</dbReference>
<dbReference type="GO" id="GO:0140267">
    <property type="term" value="P:symbiont entry into host cell via permeabilization of host membrane"/>
    <property type="evidence" value="ECO:0007669"/>
    <property type="project" value="UniProtKB-KW"/>
</dbReference>
<dbReference type="GO" id="GO:0019062">
    <property type="term" value="P:virion attachment to host cell"/>
    <property type="evidence" value="ECO:0007669"/>
    <property type="project" value="UniProtKB-KW"/>
</dbReference>
<accession>Q90187</accession>
<keyword id="KW-0024">Alternative initiation</keyword>
<keyword id="KW-0167">Capsid protein</keyword>
<keyword id="KW-1165">Clathrin-mediated endocytosis of virus by host</keyword>
<keyword id="KW-0945">Host-virus interaction</keyword>
<keyword id="KW-1185">Reference proteome</keyword>
<keyword id="KW-1140">T=1 icosahedral capsid protein</keyword>
<keyword id="KW-1161">Viral attachment to host cell</keyword>
<keyword id="KW-1162">Viral penetration into host cytoplasm</keyword>
<keyword id="KW-1173">Viral penetration via permeabilization of host membrane</keyword>
<keyword id="KW-0946">Virion</keyword>
<keyword id="KW-1164">Virus endocytosis by host</keyword>
<keyword id="KW-1160">Virus entry into host cell</keyword>
<organism>
    <name type="scientific">Aedes albopictus densovirus (isolate Boublik/1994)</name>
    <name type="common">AalDNV</name>
    <dbReference type="NCBI Taxonomy" id="648330"/>
    <lineage>
        <taxon>Viruses</taxon>
        <taxon>Monodnaviria</taxon>
        <taxon>Shotokuvirae</taxon>
        <taxon>Cossaviricota</taxon>
        <taxon>Quintoviricetes</taxon>
        <taxon>Piccovirales</taxon>
        <taxon>Parvoviridae</taxon>
        <taxon>Hamaparvovirinae</taxon>
        <taxon>Brevihamaparvovirus</taxon>
        <taxon>Brevihamaparvovirus dipteran1</taxon>
    </lineage>
</organism>
<proteinExistence type="inferred from homology"/>
<organismHost>
    <name type="scientific">Aedes albopictus</name>
    <name type="common">Asian tiger mosquito</name>
    <name type="synonym">Stegomyia albopicta</name>
    <dbReference type="NCBI Taxonomy" id="7160"/>
</organismHost>
<evidence type="ECO:0000250" key="1"/>
<evidence type="ECO:0000256" key="2">
    <source>
        <dbReference type="SAM" id="MobiDB-lite"/>
    </source>
</evidence>
<evidence type="ECO:0000269" key="3">
    <source>
    </source>
</evidence>
<evidence type="ECO:0000305" key="4"/>